<accession>Q1I419</accession>
<sequence length="626" mass="69633">MSKQEKAISLSESAQVDQQSVQPLPNSRKVYVEGSRPDIRVPMREISLHDTPTDFGGEKNAPVLVYDTSGPYTDPNVVIDVRKGLGDVRSAWIDARGDTERLEGLSSNFGLQRLNDAELAKLRFAHVRNPRRAKAGANVSQMHYARQGIITAEMEYVAIRENMKLQEARAAGLLDQQHAGHSFGASIPKEITPEFVREEIARGRAIIPANINHTELEPMIIGRNFLVKINGNIGNSALGSSIEEEVAKLTWGIRWGSDTVMDLSTGKHIHETREWIIRNSPVPIGTVPIYQALEKVNGVAEDLTWELFRDTLIEQAEQGVDYFTIHAGVLLRYVPLTAKRVTGIVSRGGSIMAKWCLAHHKENFLYTHFDEICEIMKAYDVSFSLGDGLRPGSIADANDAAQFGELETLGELTKIAWKHDVQCMIEGPGHVPMQLIKENMDKQLECCDEAPFYTLGPLTTDIAPGYDHITSGIGAAMIGWFGCAMLCYVTPKEHLGLPNKDDVKTGIITYKIAAHAADLAKGHPGAQIRDNALSKARFEFRWEDQFNLGLDPDTARSFHDETLPKESAKVAHFCSMCGPKFCSMKITQEVREYAAKIETVDVTVEQGMREQSERFRQEGSQLYQKV</sequence>
<dbReference type="EC" id="4.1.99.17" evidence="1"/>
<dbReference type="EMBL" id="CT573326">
    <property type="protein sequence ID" value="CAK17617.1"/>
    <property type="molecule type" value="Genomic_DNA"/>
</dbReference>
<dbReference type="RefSeq" id="WP_011535977.1">
    <property type="nucleotide sequence ID" value="NC_008027.1"/>
</dbReference>
<dbReference type="SMR" id="Q1I419"/>
<dbReference type="STRING" id="384676.PSEEN4977"/>
<dbReference type="GeneID" id="32807921"/>
<dbReference type="KEGG" id="pen:PSEEN4977"/>
<dbReference type="eggNOG" id="COG0422">
    <property type="taxonomic scope" value="Bacteria"/>
</dbReference>
<dbReference type="HOGENOM" id="CLU_013181_2_1_6"/>
<dbReference type="OrthoDB" id="9805897at2"/>
<dbReference type="UniPathway" id="UPA00060"/>
<dbReference type="Proteomes" id="UP000000658">
    <property type="component" value="Chromosome"/>
</dbReference>
<dbReference type="GO" id="GO:0005829">
    <property type="term" value="C:cytosol"/>
    <property type="evidence" value="ECO:0007669"/>
    <property type="project" value="TreeGrafter"/>
</dbReference>
<dbReference type="GO" id="GO:0051539">
    <property type="term" value="F:4 iron, 4 sulfur cluster binding"/>
    <property type="evidence" value="ECO:0007669"/>
    <property type="project" value="UniProtKB-KW"/>
</dbReference>
<dbReference type="GO" id="GO:0016830">
    <property type="term" value="F:carbon-carbon lyase activity"/>
    <property type="evidence" value="ECO:0007669"/>
    <property type="project" value="InterPro"/>
</dbReference>
<dbReference type="GO" id="GO:0008270">
    <property type="term" value="F:zinc ion binding"/>
    <property type="evidence" value="ECO:0007669"/>
    <property type="project" value="UniProtKB-UniRule"/>
</dbReference>
<dbReference type="GO" id="GO:0009228">
    <property type="term" value="P:thiamine biosynthetic process"/>
    <property type="evidence" value="ECO:0007669"/>
    <property type="project" value="UniProtKB-KW"/>
</dbReference>
<dbReference type="GO" id="GO:0009229">
    <property type="term" value="P:thiamine diphosphate biosynthetic process"/>
    <property type="evidence" value="ECO:0007669"/>
    <property type="project" value="UniProtKB-UniRule"/>
</dbReference>
<dbReference type="FunFam" id="3.20.20.540:FF:000001">
    <property type="entry name" value="Phosphomethylpyrimidine synthase"/>
    <property type="match status" value="1"/>
</dbReference>
<dbReference type="Gene3D" id="6.10.250.620">
    <property type="match status" value="1"/>
</dbReference>
<dbReference type="Gene3D" id="3.20.20.540">
    <property type="entry name" value="Radical SAM ThiC family, central domain"/>
    <property type="match status" value="1"/>
</dbReference>
<dbReference type="HAMAP" id="MF_00089">
    <property type="entry name" value="ThiC"/>
    <property type="match status" value="1"/>
</dbReference>
<dbReference type="InterPro" id="IPR037509">
    <property type="entry name" value="ThiC"/>
</dbReference>
<dbReference type="InterPro" id="IPR025747">
    <property type="entry name" value="ThiC-associated_dom"/>
</dbReference>
<dbReference type="InterPro" id="IPR038521">
    <property type="entry name" value="ThiC/Bza_core_dom"/>
</dbReference>
<dbReference type="InterPro" id="IPR002817">
    <property type="entry name" value="ThiC/BzaA/B"/>
</dbReference>
<dbReference type="NCBIfam" id="NF006763">
    <property type="entry name" value="PRK09284.1"/>
    <property type="match status" value="1"/>
</dbReference>
<dbReference type="NCBIfam" id="NF009895">
    <property type="entry name" value="PRK13352.1"/>
    <property type="match status" value="1"/>
</dbReference>
<dbReference type="NCBIfam" id="TIGR00190">
    <property type="entry name" value="thiC"/>
    <property type="match status" value="1"/>
</dbReference>
<dbReference type="PANTHER" id="PTHR30557:SF1">
    <property type="entry name" value="PHOSPHOMETHYLPYRIMIDINE SYNTHASE, CHLOROPLASTIC"/>
    <property type="match status" value="1"/>
</dbReference>
<dbReference type="PANTHER" id="PTHR30557">
    <property type="entry name" value="THIAMINE BIOSYNTHESIS PROTEIN THIC"/>
    <property type="match status" value="1"/>
</dbReference>
<dbReference type="Pfam" id="PF13667">
    <property type="entry name" value="ThiC-associated"/>
    <property type="match status" value="1"/>
</dbReference>
<dbReference type="Pfam" id="PF01964">
    <property type="entry name" value="ThiC_Rad_SAM"/>
    <property type="match status" value="1"/>
</dbReference>
<dbReference type="SFLD" id="SFLDF00407">
    <property type="entry name" value="phosphomethylpyrimidine_syntha"/>
    <property type="match status" value="1"/>
</dbReference>
<dbReference type="SFLD" id="SFLDG01114">
    <property type="entry name" value="phosphomethylpyrimidine_syntha"/>
    <property type="match status" value="1"/>
</dbReference>
<dbReference type="SFLD" id="SFLDS00113">
    <property type="entry name" value="Radical_SAM_Phosphomethylpyrim"/>
    <property type="match status" value="1"/>
</dbReference>
<evidence type="ECO:0000255" key="1">
    <source>
        <dbReference type="HAMAP-Rule" id="MF_00089"/>
    </source>
</evidence>
<evidence type="ECO:0000256" key="2">
    <source>
        <dbReference type="SAM" id="MobiDB-lite"/>
    </source>
</evidence>
<organism>
    <name type="scientific">Pseudomonas entomophila (strain L48)</name>
    <dbReference type="NCBI Taxonomy" id="384676"/>
    <lineage>
        <taxon>Bacteria</taxon>
        <taxon>Pseudomonadati</taxon>
        <taxon>Pseudomonadota</taxon>
        <taxon>Gammaproteobacteria</taxon>
        <taxon>Pseudomonadales</taxon>
        <taxon>Pseudomonadaceae</taxon>
        <taxon>Pseudomonas</taxon>
    </lineage>
</organism>
<reference key="1">
    <citation type="journal article" date="2006" name="Nat. Biotechnol.">
        <title>Complete genome sequence of the entomopathogenic and metabolically versatile soil bacterium Pseudomonas entomophila.</title>
        <authorList>
            <person name="Vodovar N."/>
            <person name="Vallenet D."/>
            <person name="Cruveiller S."/>
            <person name="Rouy Z."/>
            <person name="Barbe V."/>
            <person name="Acosta C."/>
            <person name="Cattolico L."/>
            <person name="Jubin C."/>
            <person name="Lajus A."/>
            <person name="Segurens B."/>
            <person name="Vacherie B."/>
            <person name="Wincker P."/>
            <person name="Weissenbach J."/>
            <person name="Lemaitre B."/>
            <person name="Medigue C."/>
            <person name="Boccard F."/>
        </authorList>
    </citation>
    <scope>NUCLEOTIDE SEQUENCE [LARGE SCALE GENOMIC DNA]</scope>
    <source>
        <strain>L48</strain>
    </source>
</reference>
<keyword id="KW-0004">4Fe-4S</keyword>
<keyword id="KW-0408">Iron</keyword>
<keyword id="KW-0411">Iron-sulfur</keyword>
<keyword id="KW-0456">Lyase</keyword>
<keyword id="KW-0479">Metal-binding</keyword>
<keyword id="KW-0949">S-adenosyl-L-methionine</keyword>
<keyword id="KW-0784">Thiamine biosynthesis</keyword>
<keyword id="KW-0862">Zinc</keyword>
<comment type="function">
    <text evidence="1">Catalyzes the synthesis of the hydroxymethylpyrimidine phosphate (HMP-P) moiety of thiamine from aminoimidazole ribotide (AIR) in a radical S-adenosyl-L-methionine (SAM)-dependent reaction.</text>
</comment>
<comment type="catalytic activity">
    <reaction evidence="1">
        <text>5-amino-1-(5-phospho-beta-D-ribosyl)imidazole + S-adenosyl-L-methionine = 4-amino-2-methyl-5-(phosphooxymethyl)pyrimidine + CO + 5'-deoxyadenosine + formate + L-methionine + 3 H(+)</text>
        <dbReference type="Rhea" id="RHEA:24840"/>
        <dbReference type="ChEBI" id="CHEBI:15378"/>
        <dbReference type="ChEBI" id="CHEBI:15740"/>
        <dbReference type="ChEBI" id="CHEBI:17245"/>
        <dbReference type="ChEBI" id="CHEBI:17319"/>
        <dbReference type="ChEBI" id="CHEBI:57844"/>
        <dbReference type="ChEBI" id="CHEBI:58354"/>
        <dbReference type="ChEBI" id="CHEBI:59789"/>
        <dbReference type="ChEBI" id="CHEBI:137981"/>
        <dbReference type="EC" id="4.1.99.17"/>
    </reaction>
</comment>
<comment type="cofactor">
    <cofactor evidence="1">
        <name>[4Fe-4S] cluster</name>
        <dbReference type="ChEBI" id="CHEBI:49883"/>
    </cofactor>
    <text evidence="1">Binds 1 [4Fe-4S] cluster per subunit. The cluster is coordinated with 3 cysteines and an exchangeable S-adenosyl-L-methionine.</text>
</comment>
<comment type="pathway">
    <text evidence="1">Cofactor biosynthesis; thiamine diphosphate biosynthesis.</text>
</comment>
<comment type="subunit">
    <text evidence="1">Homodimer.</text>
</comment>
<comment type="similarity">
    <text evidence="1">Belongs to the ThiC family.</text>
</comment>
<gene>
    <name evidence="1" type="primary">thiC</name>
    <name type="ordered locus">PSEEN4977</name>
</gene>
<name>THIC_PSEE4</name>
<protein>
    <recommendedName>
        <fullName evidence="1">Phosphomethylpyrimidine synthase</fullName>
        <ecNumber evidence="1">4.1.99.17</ecNumber>
    </recommendedName>
    <alternativeName>
        <fullName evidence="1">Hydroxymethylpyrimidine phosphate synthase</fullName>
        <shortName evidence="1">HMP-P synthase</shortName>
        <shortName evidence="1">HMP-phosphate synthase</shortName>
        <shortName evidence="1">HMPP synthase</shortName>
    </alternativeName>
    <alternativeName>
        <fullName evidence="1">Thiamine biosynthesis protein ThiC</fullName>
    </alternativeName>
</protein>
<proteinExistence type="inferred from homology"/>
<feature type="chain" id="PRO_1000004794" description="Phosphomethylpyrimidine synthase">
    <location>
        <begin position="1"/>
        <end position="626"/>
    </location>
</feature>
<feature type="region of interest" description="Disordered" evidence="2">
    <location>
        <begin position="1"/>
        <end position="27"/>
    </location>
</feature>
<feature type="compositionally biased region" description="Polar residues" evidence="2">
    <location>
        <begin position="10"/>
        <end position="25"/>
    </location>
</feature>
<feature type="binding site" evidence="1">
    <location>
        <position position="232"/>
    </location>
    <ligand>
        <name>substrate</name>
    </ligand>
</feature>
<feature type="binding site" evidence="1">
    <location>
        <position position="261"/>
    </location>
    <ligand>
        <name>substrate</name>
    </ligand>
</feature>
<feature type="binding site" evidence="1">
    <location>
        <position position="290"/>
    </location>
    <ligand>
        <name>substrate</name>
    </ligand>
</feature>
<feature type="binding site" evidence="1">
    <location>
        <position position="326"/>
    </location>
    <ligand>
        <name>substrate</name>
    </ligand>
</feature>
<feature type="binding site" evidence="1">
    <location>
        <begin position="346"/>
        <end position="348"/>
    </location>
    <ligand>
        <name>substrate</name>
    </ligand>
</feature>
<feature type="binding site" evidence="1">
    <location>
        <begin position="387"/>
        <end position="390"/>
    </location>
    <ligand>
        <name>substrate</name>
    </ligand>
</feature>
<feature type="binding site" evidence="1">
    <location>
        <position position="426"/>
    </location>
    <ligand>
        <name>substrate</name>
    </ligand>
</feature>
<feature type="binding site" evidence="1">
    <location>
        <position position="430"/>
    </location>
    <ligand>
        <name>Zn(2+)</name>
        <dbReference type="ChEBI" id="CHEBI:29105"/>
    </ligand>
</feature>
<feature type="binding site" evidence="1">
    <location>
        <position position="453"/>
    </location>
    <ligand>
        <name>substrate</name>
    </ligand>
</feature>
<feature type="binding site" evidence="1">
    <location>
        <position position="494"/>
    </location>
    <ligand>
        <name>Zn(2+)</name>
        <dbReference type="ChEBI" id="CHEBI:29105"/>
    </ligand>
</feature>
<feature type="binding site" evidence="1">
    <location>
        <position position="574"/>
    </location>
    <ligand>
        <name>[4Fe-4S] cluster</name>
        <dbReference type="ChEBI" id="CHEBI:49883"/>
        <note>4Fe-4S-S-AdoMet</note>
    </ligand>
</feature>
<feature type="binding site" evidence="1">
    <location>
        <position position="577"/>
    </location>
    <ligand>
        <name>[4Fe-4S] cluster</name>
        <dbReference type="ChEBI" id="CHEBI:49883"/>
        <note>4Fe-4S-S-AdoMet</note>
    </ligand>
</feature>
<feature type="binding site" evidence="1">
    <location>
        <position position="582"/>
    </location>
    <ligand>
        <name>[4Fe-4S] cluster</name>
        <dbReference type="ChEBI" id="CHEBI:49883"/>
        <note>4Fe-4S-S-AdoMet</note>
    </ligand>
</feature>